<organism>
    <name type="scientific">Ailuropoda melanoleuca</name>
    <name type="common">Giant panda</name>
    <dbReference type="NCBI Taxonomy" id="9646"/>
    <lineage>
        <taxon>Eukaryota</taxon>
        <taxon>Metazoa</taxon>
        <taxon>Chordata</taxon>
        <taxon>Craniata</taxon>
        <taxon>Vertebrata</taxon>
        <taxon>Euteleostomi</taxon>
        <taxon>Mammalia</taxon>
        <taxon>Eutheria</taxon>
        <taxon>Laurasiatheria</taxon>
        <taxon>Carnivora</taxon>
        <taxon>Caniformia</taxon>
        <taxon>Ursidae</taxon>
        <taxon>Ailuropoda</taxon>
    </lineage>
</organism>
<keyword id="KW-0130">Cell adhesion</keyword>
<keyword id="KW-1003">Cell membrane</keyword>
<keyword id="KW-0966">Cell projection</keyword>
<keyword id="KW-1015">Disulfide bond</keyword>
<keyword id="KW-0325">Glycoprotein</keyword>
<keyword id="KW-0393">Immunoglobulin domain</keyword>
<keyword id="KW-0433">Leucine-rich repeat</keyword>
<keyword id="KW-0472">Membrane</keyword>
<keyword id="KW-0628">Postsynaptic cell membrane</keyword>
<keyword id="KW-1185">Reference proteome</keyword>
<keyword id="KW-0677">Repeat</keyword>
<keyword id="KW-0732">Signal</keyword>
<keyword id="KW-0770">Synapse</keyword>
<keyword id="KW-0812">Transmembrane</keyword>
<keyword id="KW-1133">Transmembrane helix</keyword>
<evidence type="ECO:0000250" key="1"/>
<evidence type="ECO:0000255" key="2"/>
<evidence type="ECO:0000255" key="3">
    <source>
        <dbReference type="PROSITE-ProRule" id="PRU00114"/>
    </source>
</evidence>
<evidence type="ECO:0000255" key="4">
    <source>
        <dbReference type="PROSITE-ProRule" id="PRU00316"/>
    </source>
</evidence>
<evidence type="ECO:0000256" key="5">
    <source>
        <dbReference type="SAM" id="MobiDB-lite"/>
    </source>
</evidence>
<evidence type="ECO:0000305" key="6"/>
<accession>D2HFT7</accession>
<sequence>MAVLPLLLCLLPLAPASSPSQPATPSPCPRRCRCQTQSLPLSVLCPGAGLLFVPPSLDRRAAELRLADNFIAAVRRRDLANMTGLLHLSLSRNTIRHVAAGAFADLRALRALHLDGNRLTSLGEGQLRGLVNLRHLILSNNQLAALAAGALDDCAETLEDLDLSYNNLEQLPWEALGRLGNVNTLGLDHNLLASVPAGAFSRLHKLARLDMTSNRLTTIPPDPLFSRLPLLARPRGSPASALVLAFGGNPLHCNCELVWLRRLAREDDLEACASPPALGGRYFWAVGEEEFVCEPPVVTHRSPPLAVPAGRPAALRCRAVGDPEPRVRWVSPQGRLVGNSSRARAFPNGTLELLVTEPGDGGIFTCIAANAAGEATAAVELTVGPPPPPQLANSTSCDPPRDGDPDALTPPSAASASAAAKAADTGPPTDRGVQVTEHGATAALVQWPDQRPIPGIRMYQIQYNSSADDILVYRMIPADSHSFLLSDLASGRTYDLCVLAVYEDGATGLTATRPVGCARFSTEPALRPCGAPHAPFLGGTMIIALGGVIVASVLVFIFVLLMRYKVHGGQPPGKAKAPAPVSSVCLQTNGSLGPTPAPPAPEPAAPRAHTVVQLDCEPWRPSHEPTGP</sequence>
<reference key="1">
    <citation type="journal article" date="2010" name="Nature">
        <title>The sequence and de novo assembly of the giant panda genome.</title>
        <authorList>
            <person name="Li R."/>
            <person name="Fan W."/>
            <person name="Tian G."/>
            <person name="Zhu H."/>
            <person name="He L."/>
            <person name="Cai J."/>
            <person name="Huang Q."/>
            <person name="Cai Q."/>
            <person name="Li B."/>
            <person name="Bai Y."/>
            <person name="Zhang Z."/>
            <person name="Zhang Y."/>
            <person name="Wang W."/>
            <person name="Li J."/>
            <person name="Wei F."/>
            <person name="Li H."/>
            <person name="Jian M."/>
            <person name="Li J."/>
            <person name="Zhang Z."/>
            <person name="Nielsen R."/>
            <person name="Li D."/>
            <person name="Gu W."/>
            <person name="Yang Z."/>
            <person name="Xuan Z."/>
            <person name="Ryder O.A."/>
            <person name="Leung F.C."/>
            <person name="Zhou Y."/>
            <person name="Cao J."/>
            <person name="Sun X."/>
            <person name="Fu Y."/>
            <person name="Fang X."/>
            <person name="Guo X."/>
            <person name="Wang B."/>
            <person name="Hou R."/>
            <person name="Shen F."/>
            <person name="Mu B."/>
            <person name="Ni P."/>
            <person name="Lin R."/>
            <person name="Qian W."/>
            <person name="Wang G."/>
            <person name="Yu C."/>
            <person name="Nie W."/>
            <person name="Wang J."/>
            <person name="Wu Z."/>
            <person name="Liang H."/>
            <person name="Min J."/>
            <person name="Wu Q."/>
            <person name="Cheng S."/>
            <person name="Ruan J."/>
            <person name="Wang M."/>
            <person name="Shi Z."/>
            <person name="Wen M."/>
            <person name="Liu B."/>
            <person name="Ren X."/>
            <person name="Zheng H."/>
            <person name="Dong D."/>
            <person name="Cook K."/>
            <person name="Shan G."/>
            <person name="Zhang H."/>
            <person name="Kosiol C."/>
            <person name="Xie X."/>
            <person name="Lu Z."/>
            <person name="Zheng H."/>
            <person name="Li Y."/>
            <person name="Steiner C.C."/>
            <person name="Lam T.T."/>
            <person name="Lin S."/>
            <person name="Zhang Q."/>
            <person name="Li G."/>
            <person name="Tian J."/>
            <person name="Gong T."/>
            <person name="Liu H."/>
            <person name="Zhang D."/>
            <person name="Fang L."/>
            <person name="Ye C."/>
            <person name="Zhang J."/>
            <person name="Hu W."/>
            <person name="Xu A."/>
            <person name="Ren Y."/>
            <person name="Zhang G."/>
            <person name="Bruford M.W."/>
            <person name="Li Q."/>
            <person name="Ma L."/>
            <person name="Guo Y."/>
            <person name="An N."/>
            <person name="Hu Y."/>
            <person name="Zheng Y."/>
            <person name="Shi Y."/>
            <person name="Li Z."/>
            <person name="Liu Q."/>
            <person name="Chen Y."/>
            <person name="Zhao J."/>
            <person name="Qu N."/>
            <person name="Zhao S."/>
            <person name="Tian F."/>
            <person name="Wang X."/>
            <person name="Wang H."/>
            <person name="Xu L."/>
            <person name="Liu X."/>
            <person name="Vinar T."/>
            <person name="Wang Y."/>
            <person name="Lam T.W."/>
            <person name="Yiu S.M."/>
            <person name="Liu S."/>
            <person name="Zhang H."/>
            <person name="Li D."/>
            <person name="Huang Y."/>
            <person name="Wang X."/>
            <person name="Yang G."/>
            <person name="Jiang Z."/>
            <person name="Wang J."/>
            <person name="Qin N."/>
            <person name="Li L."/>
            <person name="Li J."/>
            <person name="Bolund L."/>
            <person name="Kristiansen K."/>
            <person name="Wong G.K."/>
            <person name="Olson M."/>
            <person name="Zhang X."/>
            <person name="Li S."/>
            <person name="Yang H."/>
            <person name="Wang J."/>
            <person name="Wang J."/>
        </authorList>
    </citation>
    <scope>NUCLEOTIDE SEQUENCE [LARGE SCALE GENOMIC DNA]</scope>
</reference>
<proteinExistence type="inferred from homology"/>
<protein>
    <recommendedName>
        <fullName>Leucine-rich repeat and fibronectin type-III domain-containing protein 3</fullName>
    </recommendedName>
    <alternativeName>
        <fullName>Synaptic adhesion-like molecule 4</fullName>
    </alternativeName>
</protein>
<name>LRFN3_AILME</name>
<gene>
    <name type="primary">LRFN3</name>
    <name type="synonym">SALM4</name>
    <name type="ORF">PANDA_009783</name>
</gene>
<dbReference type="EMBL" id="GL192794">
    <property type="protein sequence ID" value="EFB29885.1"/>
    <property type="molecule type" value="Genomic_DNA"/>
</dbReference>
<dbReference type="RefSeq" id="XP_002920951.1">
    <property type="nucleotide sequence ID" value="XM_002920905.4"/>
</dbReference>
<dbReference type="SMR" id="D2HFT7"/>
<dbReference type="STRING" id="9646.ENSAMEP00000000896"/>
<dbReference type="GlyCosmos" id="D2HFT7">
    <property type="glycosylation" value="2 sites, No reported glycans"/>
</dbReference>
<dbReference type="Ensembl" id="ENSAMET00000000932.2">
    <property type="protein sequence ID" value="ENSAMEP00000000896.1"/>
    <property type="gene ID" value="ENSAMEG00000000862.2"/>
</dbReference>
<dbReference type="GeneID" id="100472610"/>
<dbReference type="KEGG" id="aml:100472610"/>
<dbReference type="CTD" id="79414"/>
<dbReference type="eggNOG" id="KOG0619">
    <property type="taxonomic scope" value="Eukaryota"/>
</dbReference>
<dbReference type="GeneTree" id="ENSGT00940000161203"/>
<dbReference type="HOGENOM" id="CLU_016998_1_0_1"/>
<dbReference type="InParanoid" id="D2HFT7"/>
<dbReference type="OMA" id="EQEYKQC"/>
<dbReference type="OrthoDB" id="1394818at2759"/>
<dbReference type="TreeFam" id="TF350185"/>
<dbReference type="Proteomes" id="UP000008912">
    <property type="component" value="Unassembled WGS sequence"/>
</dbReference>
<dbReference type="GO" id="GO:0030424">
    <property type="term" value="C:axon"/>
    <property type="evidence" value="ECO:0007669"/>
    <property type="project" value="UniProtKB-SubCell"/>
</dbReference>
<dbReference type="GO" id="GO:0009986">
    <property type="term" value="C:cell surface"/>
    <property type="evidence" value="ECO:0007669"/>
    <property type="project" value="Ensembl"/>
</dbReference>
<dbReference type="GO" id="GO:0030425">
    <property type="term" value="C:dendrite"/>
    <property type="evidence" value="ECO:0007669"/>
    <property type="project" value="UniProtKB-SubCell"/>
</dbReference>
<dbReference type="GO" id="GO:0045211">
    <property type="term" value="C:postsynaptic membrane"/>
    <property type="evidence" value="ECO:0007669"/>
    <property type="project" value="UniProtKB-SubCell"/>
</dbReference>
<dbReference type="GO" id="GO:0048787">
    <property type="term" value="C:presynaptic active zone membrane"/>
    <property type="evidence" value="ECO:0007669"/>
    <property type="project" value="TreeGrafter"/>
</dbReference>
<dbReference type="GO" id="GO:0007155">
    <property type="term" value="P:cell adhesion"/>
    <property type="evidence" value="ECO:0007669"/>
    <property type="project" value="UniProtKB-KW"/>
</dbReference>
<dbReference type="CDD" id="cd00063">
    <property type="entry name" value="FN3"/>
    <property type="match status" value="1"/>
</dbReference>
<dbReference type="FunFam" id="2.60.40.10:FF:000235">
    <property type="entry name" value="Leucine-rich repeat and fibronectin type III domain-containing 2"/>
    <property type="match status" value="1"/>
</dbReference>
<dbReference type="FunFam" id="2.60.40.10:FF:000091">
    <property type="entry name" value="Leucine-rich repeat and fibronectin type III domain-containing protein 1"/>
    <property type="match status" value="1"/>
</dbReference>
<dbReference type="FunFam" id="3.80.10.10:FF:000019">
    <property type="entry name" value="leucine-rich repeat and fibronectin type III domain-containing protein 1"/>
    <property type="match status" value="1"/>
</dbReference>
<dbReference type="FunFam" id="3.80.10.10:FF:000209">
    <property type="entry name" value="leucine-rich repeat and fibronectin type-III domain-containing protein 3"/>
    <property type="match status" value="1"/>
</dbReference>
<dbReference type="Gene3D" id="2.60.40.10">
    <property type="entry name" value="Immunoglobulins"/>
    <property type="match status" value="2"/>
</dbReference>
<dbReference type="Gene3D" id="3.80.10.10">
    <property type="entry name" value="Ribonuclease Inhibitor"/>
    <property type="match status" value="2"/>
</dbReference>
<dbReference type="InterPro" id="IPR000483">
    <property type="entry name" value="Cys-rich_flank_reg_C"/>
</dbReference>
<dbReference type="InterPro" id="IPR003961">
    <property type="entry name" value="FN3_dom"/>
</dbReference>
<dbReference type="InterPro" id="IPR036116">
    <property type="entry name" value="FN3_sf"/>
</dbReference>
<dbReference type="InterPro" id="IPR007110">
    <property type="entry name" value="Ig-like_dom"/>
</dbReference>
<dbReference type="InterPro" id="IPR036179">
    <property type="entry name" value="Ig-like_dom_sf"/>
</dbReference>
<dbReference type="InterPro" id="IPR013783">
    <property type="entry name" value="Ig-like_fold"/>
</dbReference>
<dbReference type="InterPro" id="IPR013098">
    <property type="entry name" value="Ig_I-set"/>
</dbReference>
<dbReference type="InterPro" id="IPR003599">
    <property type="entry name" value="Ig_sub"/>
</dbReference>
<dbReference type="InterPro" id="IPR003598">
    <property type="entry name" value="Ig_sub2"/>
</dbReference>
<dbReference type="InterPro" id="IPR001611">
    <property type="entry name" value="Leu-rich_rpt"/>
</dbReference>
<dbReference type="InterPro" id="IPR003591">
    <property type="entry name" value="Leu-rich_rpt_typical-subtyp"/>
</dbReference>
<dbReference type="InterPro" id="IPR050467">
    <property type="entry name" value="LRFN"/>
</dbReference>
<dbReference type="InterPro" id="IPR032675">
    <property type="entry name" value="LRR_dom_sf"/>
</dbReference>
<dbReference type="PANTHER" id="PTHR45842:SF5">
    <property type="entry name" value="LEUCINE-RICH REPEAT AND FIBRONECTIN TYPE-III DOMAIN-CONTAINING PROTEIN 3"/>
    <property type="match status" value="1"/>
</dbReference>
<dbReference type="PANTHER" id="PTHR45842">
    <property type="entry name" value="SYNAPTIC ADHESION-LIKE MOLECULE SALM"/>
    <property type="match status" value="1"/>
</dbReference>
<dbReference type="Pfam" id="PF00041">
    <property type="entry name" value="fn3"/>
    <property type="match status" value="1"/>
</dbReference>
<dbReference type="Pfam" id="PF07679">
    <property type="entry name" value="I-set"/>
    <property type="match status" value="1"/>
</dbReference>
<dbReference type="Pfam" id="PF13855">
    <property type="entry name" value="LRR_8"/>
    <property type="match status" value="2"/>
</dbReference>
<dbReference type="SMART" id="SM00409">
    <property type="entry name" value="IG"/>
    <property type="match status" value="1"/>
</dbReference>
<dbReference type="SMART" id="SM00408">
    <property type="entry name" value="IGc2"/>
    <property type="match status" value="1"/>
</dbReference>
<dbReference type="SMART" id="SM00369">
    <property type="entry name" value="LRR_TYP"/>
    <property type="match status" value="6"/>
</dbReference>
<dbReference type="SMART" id="SM00082">
    <property type="entry name" value="LRRCT"/>
    <property type="match status" value="1"/>
</dbReference>
<dbReference type="SUPFAM" id="SSF49265">
    <property type="entry name" value="Fibronectin type III"/>
    <property type="match status" value="1"/>
</dbReference>
<dbReference type="SUPFAM" id="SSF48726">
    <property type="entry name" value="Immunoglobulin"/>
    <property type="match status" value="1"/>
</dbReference>
<dbReference type="SUPFAM" id="SSF52058">
    <property type="entry name" value="L domain-like"/>
    <property type="match status" value="1"/>
</dbReference>
<dbReference type="PROSITE" id="PS50853">
    <property type="entry name" value="FN3"/>
    <property type="match status" value="1"/>
</dbReference>
<dbReference type="PROSITE" id="PS50835">
    <property type="entry name" value="IG_LIKE"/>
    <property type="match status" value="1"/>
</dbReference>
<feature type="signal peptide" evidence="2">
    <location>
        <begin position="1"/>
        <end position="16"/>
    </location>
</feature>
<feature type="chain" id="PRO_0000394520" description="Leucine-rich repeat and fibronectin type-III domain-containing protein 3">
    <location>
        <begin position="17"/>
        <end position="628"/>
    </location>
</feature>
<feature type="topological domain" description="Extracellular" evidence="2">
    <location>
        <begin position="17"/>
        <end position="540"/>
    </location>
</feature>
<feature type="transmembrane region" description="Helical" evidence="2">
    <location>
        <begin position="541"/>
        <end position="561"/>
    </location>
</feature>
<feature type="topological domain" description="Cytoplasmic" evidence="2">
    <location>
        <begin position="562"/>
        <end position="628"/>
    </location>
</feature>
<feature type="domain" description="LRRNT">
    <location>
        <begin position="19"/>
        <end position="59"/>
    </location>
</feature>
<feature type="repeat" description="LRR 1">
    <location>
        <begin position="84"/>
        <end position="105"/>
    </location>
</feature>
<feature type="repeat" description="LRR 2">
    <location>
        <begin position="108"/>
        <end position="129"/>
    </location>
</feature>
<feature type="repeat" description="LRR 3">
    <location>
        <begin position="132"/>
        <end position="153"/>
    </location>
</feature>
<feature type="repeat" description="LRR 4">
    <location>
        <begin position="157"/>
        <end position="178"/>
    </location>
</feature>
<feature type="repeat" description="LRR 5">
    <location>
        <begin position="181"/>
        <end position="202"/>
    </location>
</feature>
<feature type="repeat" description="LRR 6">
    <location>
        <begin position="205"/>
        <end position="226"/>
    </location>
</feature>
<feature type="domain" description="LRRCT">
    <location>
        <begin position="249"/>
        <end position="295"/>
    </location>
</feature>
<feature type="domain" description="Ig-like">
    <location>
        <begin position="295"/>
        <end position="382"/>
    </location>
</feature>
<feature type="domain" description="Fibronectin type-III" evidence="4">
    <location>
        <begin position="427"/>
        <end position="525"/>
    </location>
</feature>
<feature type="region of interest" description="Disordered" evidence="5">
    <location>
        <begin position="380"/>
        <end position="432"/>
    </location>
</feature>
<feature type="region of interest" description="Disordered" evidence="5">
    <location>
        <begin position="587"/>
        <end position="628"/>
    </location>
</feature>
<feature type="compositionally biased region" description="Low complexity" evidence="5">
    <location>
        <begin position="406"/>
        <end position="429"/>
    </location>
</feature>
<feature type="compositionally biased region" description="Pro residues" evidence="5">
    <location>
        <begin position="595"/>
        <end position="604"/>
    </location>
</feature>
<feature type="compositionally biased region" description="Basic and acidic residues" evidence="5">
    <location>
        <begin position="617"/>
        <end position="628"/>
    </location>
</feature>
<feature type="glycosylation site" description="N-linked (GlcNAc...) asparagine" evidence="2">
    <location>
        <position position="348"/>
    </location>
</feature>
<feature type="glycosylation site" description="N-linked (GlcNAc...) asparagine" evidence="2">
    <location>
        <position position="393"/>
    </location>
</feature>
<feature type="disulfide bond" evidence="3">
    <location>
        <begin position="317"/>
        <end position="366"/>
    </location>
</feature>
<comment type="function">
    <text evidence="1">Cell adhesion molecule that mediates homophilic cell-cell adhesion in a Ca(2+)-independent manner. Promotes neurite outgrowth in hippocampal neurons (By similarity).</text>
</comment>
<comment type="subunit">
    <text evidence="1">Can form heteromeric complexes with LRFN1, LRFN2, LRFN4 and LRFN5. Able to form homomeric complexes across cell junctions, between adjacent cells. Does not interact with DLG4 (By similarity).</text>
</comment>
<comment type="subcellular location">
    <subcellularLocation>
        <location>Cell membrane</location>
        <topology>Single-pass type I membrane protein</topology>
    </subcellularLocation>
    <subcellularLocation>
        <location>Cell projection</location>
        <location>Axon</location>
    </subcellularLocation>
    <subcellularLocation>
        <location>Cell projection</location>
        <location>Dendrite</location>
    </subcellularLocation>
    <subcellularLocation>
        <location>Synapse</location>
    </subcellularLocation>
    <subcellularLocation>
        <location>Presynaptic cell membrane</location>
    </subcellularLocation>
    <subcellularLocation>
        <location evidence="1">Postsynaptic cell membrane</location>
    </subcellularLocation>
</comment>
<comment type="domain">
    <text>Lacks a cytoplasmic PDZ-binding domain, which has been implicated in function of related Lrfn proteins.</text>
</comment>
<comment type="PTM">
    <text evidence="1">N-glycosylated.</text>
</comment>
<comment type="similarity">
    <text evidence="6">Belongs to the LRFN family.</text>
</comment>